<proteinExistence type="inferred from homology"/>
<sequence>MASTIQALPQEVVYLITAGEVIDSFAAVVRELVENSLDAGANRIVVYLWPQQWRVRVADNGCGMNLDDLQQAASAHSTSKIRSSADLWKIHSLGFRGEALHSLTTLADVEIISRAPENVGWRVVYGDSGKAVHVEATAIAPGTVVTVSNLFASCAARRQGLPTTAQQMKAVQATIQQIALCHPQTTWQVWQNDRIWFTISPAATAGQLIPQFLPQLRPSDLQEIKLEIPNPENPQLSTNNKPNASALALVVGLPDRCHRHRPDWVRVAINGRMIKLPELEQTILAAFHRTLPRDRYPLCFVHLLISPDQINWNRNPAKTEIYLHDLSYWQEQVTQAINQALRISAANIPESVQTTRVSQLLKAAEEKGNYNFNPRNANPADNTQNYLKAVAQVSNTYIVAEHPGGMWLVEQHIAHERVLYEQLCDNWRLIPVEPPIILYQLSPAQVAQLQRIGLDIDIFGEQLWAVRNLPAMLQQREDCAEAILELSWGGDLQTAQVAVACRSAIRNGTPMSLPEMQKLLDDWQRTRNPRTCPHGRPIYLSLDESSLSRFFRRHWVIGKSHGI</sequence>
<organism>
    <name type="scientific">Nostoc sp. (strain PCC 7120 / SAG 25.82 / UTEX 2576)</name>
    <dbReference type="NCBI Taxonomy" id="103690"/>
    <lineage>
        <taxon>Bacteria</taxon>
        <taxon>Bacillati</taxon>
        <taxon>Cyanobacteriota</taxon>
        <taxon>Cyanophyceae</taxon>
        <taxon>Nostocales</taxon>
        <taxon>Nostocaceae</taxon>
        <taxon>Nostoc</taxon>
    </lineage>
</organism>
<keyword id="KW-0227">DNA damage</keyword>
<keyword id="KW-0234">DNA repair</keyword>
<keyword id="KW-1185">Reference proteome</keyword>
<name>MUTL_NOSS1</name>
<protein>
    <recommendedName>
        <fullName>DNA mismatch repair protein MutL</fullName>
    </recommendedName>
</protein>
<feature type="chain" id="PRO_0000177923" description="DNA mismatch repair protein MutL">
    <location>
        <begin position="1"/>
        <end position="563"/>
    </location>
</feature>
<gene>
    <name type="primary">mutL</name>
    <name type="ordered locus">alr3055</name>
</gene>
<evidence type="ECO:0000250" key="1"/>
<evidence type="ECO:0000305" key="2"/>
<comment type="function">
    <text evidence="1">This protein is involved in the repair of mismatches in DNA. It is required for dam-dependent methyl-directed DNA mismatch repair. May act as a 'molecular matchmaker', a protein that promotes the formation of a stable complex between two or more DNA-binding proteins in an ATP-dependent manner without itself being part of a final effector complex (By similarity).</text>
</comment>
<comment type="similarity">
    <text evidence="2">Belongs to the DNA mismatch repair MutL/HexB family.</text>
</comment>
<dbReference type="EMBL" id="BA000019">
    <property type="protein sequence ID" value="BAB74754.1"/>
    <property type="molecule type" value="Genomic_DNA"/>
</dbReference>
<dbReference type="PIR" id="AH2187">
    <property type="entry name" value="AH2187"/>
</dbReference>
<dbReference type="RefSeq" id="WP_010997206.1">
    <property type="nucleotide sequence ID" value="NZ_RSCN01000001.1"/>
</dbReference>
<dbReference type="SMR" id="Q8YSM9"/>
<dbReference type="STRING" id="103690.gene:10495091"/>
<dbReference type="KEGG" id="ana:alr3055"/>
<dbReference type="eggNOG" id="COG0323">
    <property type="taxonomic scope" value="Bacteria"/>
</dbReference>
<dbReference type="OrthoDB" id="9763467at2"/>
<dbReference type="Proteomes" id="UP000002483">
    <property type="component" value="Chromosome"/>
</dbReference>
<dbReference type="GO" id="GO:0032300">
    <property type="term" value="C:mismatch repair complex"/>
    <property type="evidence" value="ECO:0007669"/>
    <property type="project" value="InterPro"/>
</dbReference>
<dbReference type="GO" id="GO:0005524">
    <property type="term" value="F:ATP binding"/>
    <property type="evidence" value="ECO:0007669"/>
    <property type="project" value="InterPro"/>
</dbReference>
<dbReference type="GO" id="GO:0016887">
    <property type="term" value="F:ATP hydrolysis activity"/>
    <property type="evidence" value="ECO:0007669"/>
    <property type="project" value="InterPro"/>
</dbReference>
<dbReference type="GO" id="GO:0140664">
    <property type="term" value="F:ATP-dependent DNA damage sensor activity"/>
    <property type="evidence" value="ECO:0007669"/>
    <property type="project" value="InterPro"/>
</dbReference>
<dbReference type="GO" id="GO:0030983">
    <property type="term" value="F:mismatched DNA binding"/>
    <property type="evidence" value="ECO:0007669"/>
    <property type="project" value="InterPro"/>
</dbReference>
<dbReference type="GO" id="GO:0006298">
    <property type="term" value="P:mismatch repair"/>
    <property type="evidence" value="ECO:0007669"/>
    <property type="project" value="UniProtKB-UniRule"/>
</dbReference>
<dbReference type="CDD" id="cd16926">
    <property type="entry name" value="HATPase_MutL-MLH-PMS-like"/>
    <property type="match status" value="1"/>
</dbReference>
<dbReference type="CDD" id="cd00782">
    <property type="entry name" value="MutL_Trans"/>
    <property type="match status" value="1"/>
</dbReference>
<dbReference type="FunFam" id="3.30.565.10:FF:000003">
    <property type="entry name" value="DNA mismatch repair endonuclease MutL"/>
    <property type="match status" value="1"/>
</dbReference>
<dbReference type="Gene3D" id="3.30.230.10">
    <property type="match status" value="1"/>
</dbReference>
<dbReference type="Gene3D" id="3.30.565.10">
    <property type="entry name" value="Histidine kinase-like ATPase, C-terminal domain"/>
    <property type="match status" value="1"/>
</dbReference>
<dbReference type="Gene3D" id="3.30.1540.20">
    <property type="entry name" value="MutL, C-terminal domain, dimerisation subdomain"/>
    <property type="match status" value="1"/>
</dbReference>
<dbReference type="Gene3D" id="3.30.1370.100">
    <property type="entry name" value="MutL, C-terminal domain, regulatory subdomain"/>
    <property type="match status" value="1"/>
</dbReference>
<dbReference type="HAMAP" id="MF_00149">
    <property type="entry name" value="DNA_mis_repair"/>
    <property type="match status" value="1"/>
</dbReference>
<dbReference type="InterPro" id="IPR014762">
    <property type="entry name" value="DNA_mismatch_repair_CS"/>
</dbReference>
<dbReference type="InterPro" id="IPR020667">
    <property type="entry name" value="DNA_mismatch_repair_MutL"/>
</dbReference>
<dbReference type="InterPro" id="IPR013507">
    <property type="entry name" value="DNA_mismatch_S5_2-like"/>
</dbReference>
<dbReference type="InterPro" id="IPR036890">
    <property type="entry name" value="HATPase_C_sf"/>
</dbReference>
<dbReference type="InterPro" id="IPR002099">
    <property type="entry name" value="MutL/Mlh/PMS"/>
</dbReference>
<dbReference type="InterPro" id="IPR038973">
    <property type="entry name" value="MutL/Mlh/Pms-like"/>
</dbReference>
<dbReference type="InterPro" id="IPR014790">
    <property type="entry name" value="MutL_C"/>
</dbReference>
<dbReference type="InterPro" id="IPR042120">
    <property type="entry name" value="MutL_C_dimsub"/>
</dbReference>
<dbReference type="InterPro" id="IPR042121">
    <property type="entry name" value="MutL_C_regsub"/>
</dbReference>
<dbReference type="InterPro" id="IPR037198">
    <property type="entry name" value="MutL_C_sf"/>
</dbReference>
<dbReference type="InterPro" id="IPR020568">
    <property type="entry name" value="Ribosomal_Su5_D2-typ_SF"/>
</dbReference>
<dbReference type="InterPro" id="IPR014721">
    <property type="entry name" value="Ribsml_uS5_D2-typ_fold_subgr"/>
</dbReference>
<dbReference type="NCBIfam" id="TIGR00585">
    <property type="entry name" value="mutl"/>
    <property type="match status" value="1"/>
</dbReference>
<dbReference type="NCBIfam" id="NF000951">
    <property type="entry name" value="PRK00095.2-1"/>
    <property type="match status" value="1"/>
</dbReference>
<dbReference type="PANTHER" id="PTHR10073">
    <property type="entry name" value="DNA MISMATCH REPAIR PROTEIN MLH, PMS, MUTL"/>
    <property type="match status" value="1"/>
</dbReference>
<dbReference type="PANTHER" id="PTHR10073:SF12">
    <property type="entry name" value="DNA MISMATCH REPAIR PROTEIN MLH1"/>
    <property type="match status" value="1"/>
</dbReference>
<dbReference type="Pfam" id="PF01119">
    <property type="entry name" value="DNA_mis_repair"/>
    <property type="match status" value="1"/>
</dbReference>
<dbReference type="Pfam" id="PF13589">
    <property type="entry name" value="HATPase_c_3"/>
    <property type="match status" value="1"/>
</dbReference>
<dbReference type="Pfam" id="PF08676">
    <property type="entry name" value="MutL_C"/>
    <property type="match status" value="1"/>
</dbReference>
<dbReference type="SMART" id="SM01340">
    <property type="entry name" value="DNA_mis_repair"/>
    <property type="match status" value="1"/>
</dbReference>
<dbReference type="SMART" id="SM00853">
    <property type="entry name" value="MutL_C"/>
    <property type="match status" value="1"/>
</dbReference>
<dbReference type="SUPFAM" id="SSF55874">
    <property type="entry name" value="ATPase domain of HSP90 chaperone/DNA topoisomerase II/histidine kinase"/>
    <property type="match status" value="1"/>
</dbReference>
<dbReference type="SUPFAM" id="SSF118116">
    <property type="entry name" value="DNA mismatch repair protein MutL"/>
    <property type="match status" value="1"/>
</dbReference>
<dbReference type="SUPFAM" id="SSF54211">
    <property type="entry name" value="Ribosomal protein S5 domain 2-like"/>
    <property type="match status" value="1"/>
</dbReference>
<dbReference type="PROSITE" id="PS00058">
    <property type="entry name" value="DNA_MISMATCH_REPAIR_1"/>
    <property type="match status" value="1"/>
</dbReference>
<reference key="1">
    <citation type="journal article" date="2001" name="DNA Res.">
        <title>Complete genomic sequence of the filamentous nitrogen-fixing cyanobacterium Anabaena sp. strain PCC 7120.</title>
        <authorList>
            <person name="Kaneko T."/>
            <person name="Nakamura Y."/>
            <person name="Wolk C.P."/>
            <person name="Kuritz T."/>
            <person name="Sasamoto S."/>
            <person name="Watanabe A."/>
            <person name="Iriguchi M."/>
            <person name="Ishikawa A."/>
            <person name="Kawashima K."/>
            <person name="Kimura T."/>
            <person name="Kishida Y."/>
            <person name="Kohara M."/>
            <person name="Matsumoto M."/>
            <person name="Matsuno A."/>
            <person name="Muraki A."/>
            <person name="Nakazaki N."/>
            <person name="Shimpo S."/>
            <person name="Sugimoto M."/>
            <person name="Takazawa M."/>
            <person name="Yamada M."/>
            <person name="Yasuda M."/>
            <person name="Tabata S."/>
        </authorList>
    </citation>
    <scope>NUCLEOTIDE SEQUENCE [LARGE SCALE GENOMIC DNA]</scope>
    <source>
        <strain>PCC 7120 / SAG 25.82 / UTEX 2576</strain>
    </source>
</reference>
<accession>Q8YSM9</accession>